<evidence type="ECO:0000255" key="1">
    <source>
        <dbReference type="HAMAP-Rule" id="MF_01849"/>
    </source>
</evidence>
<evidence type="ECO:0000255" key="2">
    <source>
        <dbReference type="PROSITE-ProRule" id="PRU01266"/>
    </source>
</evidence>
<protein>
    <recommendedName>
        <fullName evidence="1">Dual-specificity RNA methyltransferase RlmN</fullName>
        <ecNumber evidence="1">2.1.1.192</ecNumber>
    </recommendedName>
    <alternativeName>
        <fullName evidence="1">23S rRNA (adenine(2503)-C(2))-methyltransferase</fullName>
    </alternativeName>
    <alternativeName>
        <fullName evidence="1">23S rRNA m2A2503 methyltransferase</fullName>
    </alternativeName>
    <alternativeName>
        <fullName evidence="1">Ribosomal RNA large subunit methyltransferase N</fullName>
    </alternativeName>
    <alternativeName>
        <fullName evidence="1">tRNA (adenine(37)-C(2))-methyltransferase</fullName>
    </alternativeName>
    <alternativeName>
        <fullName evidence="1">tRNA m2A37 methyltransferase</fullName>
    </alternativeName>
</protein>
<proteinExistence type="inferred from homology"/>
<feature type="chain" id="PRO_0000350413" description="Dual-specificity RNA methyltransferase RlmN">
    <location>
        <begin position="1"/>
        <end position="384"/>
    </location>
</feature>
<feature type="domain" description="Radical SAM core" evidence="2">
    <location>
        <begin position="111"/>
        <end position="350"/>
    </location>
</feature>
<feature type="active site" description="Proton acceptor" evidence="1">
    <location>
        <position position="105"/>
    </location>
</feature>
<feature type="active site" description="S-methylcysteine intermediate" evidence="1">
    <location>
        <position position="355"/>
    </location>
</feature>
<feature type="binding site" evidence="1">
    <location>
        <position position="125"/>
    </location>
    <ligand>
        <name>[4Fe-4S] cluster</name>
        <dbReference type="ChEBI" id="CHEBI:49883"/>
        <note>4Fe-4S-S-AdoMet</note>
    </ligand>
</feature>
<feature type="binding site" evidence="1">
    <location>
        <position position="129"/>
    </location>
    <ligand>
        <name>[4Fe-4S] cluster</name>
        <dbReference type="ChEBI" id="CHEBI:49883"/>
        <note>4Fe-4S-S-AdoMet</note>
    </ligand>
</feature>
<feature type="binding site" evidence="1">
    <location>
        <position position="132"/>
    </location>
    <ligand>
        <name>[4Fe-4S] cluster</name>
        <dbReference type="ChEBI" id="CHEBI:49883"/>
        <note>4Fe-4S-S-AdoMet</note>
    </ligand>
</feature>
<feature type="binding site" evidence="1">
    <location>
        <begin position="179"/>
        <end position="180"/>
    </location>
    <ligand>
        <name>S-adenosyl-L-methionine</name>
        <dbReference type="ChEBI" id="CHEBI:59789"/>
    </ligand>
</feature>
<feature type="binding site" evidence="1">
    <location>
        <position position="211"/>
    </location>
    <ligand>
        <name>S-adenosyl-L-methionine</name>
        <dbReference type="ChEBI" id="CHEBI:59789"/>
    </ligand>
</feature>
<feature type="binding site" evidence="1">
    <location>
        <begin position="233"/>
        <end position="235"/>
    </location>
    <ligand>
        <name>S-adenosyl-L-methionine</name>
        <dbReference type="ChEBI" id="CHEBI:59789"/>
    </ligand>
</feature>
<feature type="binding site" evidence="1">
    <location>
        <position position="312"/>
    </location>
    <ligand>
        <name>S-adenosyl-L-methionine</name>
        <dbReference type="ChEBI" id="CHEBI:59789"/>
    </ligand>
</feature>
<feature type="disulfide bond" description="(transient)" evidence="1">
    <location>
        <begin position="118"/>
        <end position="355"/>
    </location>
</feature>
<accession>Q0T202</accession>
<dbReference type="EC" id="2.1.1.192" evidence="1"/>
<dbReference type="EMBL" id="CP000266">
    <property type="protein sequence ID" value="ABF04663.1"/>
    <property type="molecule type" value="Genomic_DNA"/>
</dbReference>
<dbReference type="RefSeq" id="WP_000003328.1">
    <property type="nucleotide sequence ID" value="NC_008258.1"/>
</dbReference>
<dbReference type="SMR" id="Q0T202"/>
<dbReference type="KEGG" id="sfv:SFV_2564"/>
<dbReference type="HOGENOM" id="CLU_029101_0_0_6"/>
<dbReference type="Proteomes" id="UP000000659">
    <property type="component" value="Chromosome"/>
</dbReference>
<dbReference type="GO" id="GO:0005737">
    <property type="term" value="C:cytoplasm"/>
    <property type="evidence" value="ECO:0007669"/>
    <property type="project" value="UniProtKB-SubCell"/>
</dbReference>
<dbReference type="GO" id="GO:0051539">
    <property type="term" value="F:4 iron, 4 sulfur cluster binding"/>
    <property type="evidence" value="ECO:0007669"/>
    <property type="project" value="UniProtKB-UniRule"/>
</dbReference>
<dbReference type="GO" id="GO:0046872">
    <property type="term" value="F:metal ion binding"/>
    <property type="evidence" value="ECO:0007669"/>
    <property type="project" value="UniProtKB-KW"/>
</dbReference>
<dbReference type="GO" id="GO:0070040">
    <property type="term" value="F:rRNA (adenine(2503)-C2-)-methyltransferase activity"/>
    <property type="evidence" value="ECO:0007669"/>
    <property type="project" value="UniProtKB-UniRule"/>
</dbReference>
<dbReference type="GO" id="GO:0019843">
    <property type="term" value="F:rRNA binding"/>
    <property type="evidence" value="ECO:0007669"/>
    <property type="project" value="UniProtKB-UniRule"/>
</dbReference>
<dbReference type="GO" id="GO:0002935">
    <property type="term" value="F:tRNA (adenine(37)-C2)-methyltransferase activity"/>
    <property type="evidence" value="ECO:0007669"/>
    <property type="project" value="UniProtKB-UniRule"/>
</dbReference>
<dbReference type="GO" id="GO:0000049">
    <property type="term" value="F:tRNA binding"/>
    <property type="evidence" value="ECO:0007669"/>
    <property type="project" value="UniProtKB-UniRule"/>
</dbReference>
<dbReference type="GO" id="GO:0070475">
    <property type="term" value="P:rRNA base methylation"/>
    <property type="evidence" value="ECO:0007669"/>
    <property type="project" value="UniProtKB-UniRule"/>
</dbReference>
<dbReference type="GO" id="GO:0030488">
    <property type="term" value="P:tRNA methylation"/>
    <property type="evidence" value="ECO:0007669"/>
    <property type="project" value="UniProtKB-UniRule"/>
</dbReference>
<dbReference type="CDD" id="cd01335">
    <property type="entry name" value="Radical_SAM"/>
    <property type="match status" value="1"/>
</dbReference>
<dbReference type="FunFam" id="1.10.150.530:FF:000001">
    <property type="entry name" value="Dual-specificity RNA methyltransferase RlmN"/>
    <property type="match status" value="1"/>
</dbReference>
<dbReference type="FunFam" id="3.20.20.70:FF:000008">
    <property type="entry name" value="Dual-specificity RNA methyltransferase RlmN"/>
    <property type="match status" value="1"/>
</dbReference>
<dbReference type="Gene3D" id="1.10.150.530">
    <property type="match status" value="1"/>
</dbReference>
<dbReference type="Gene3D" id="3.20.20.70">
    <property type="entry name" value="Aldolase class I"/>
    <property type="match status" value="1"/>
</dbReference>
<dbReference type="HAMAP" id="MF_01849">
    <property type="entry name" value="RNA_methyltr_RlmN"/>
    <property type="match status" value="1"/>
</dbReference>
<dbReference type="InterPro" id="IPR013785">
    <property type="entry name" value="Aldolase_TIM"/>
</dbReference>
<dbReference type="InterPro" id="IPR040072">
    <property type="entry name" value="Methyltransferase_A"/>
</dbReference>
<dbReference type="InterPro" id="IPR048641">
    <property type="entry name" value="RlmN_N"/>
</dbReference>
<dbReference type="InterPro" id="IPR027492">
    <property type="entry name" value="RNA_MTrfase_RlmN"/>
</dbReference>
<dbReference type="InterPro" id="IPR004383">
    <property type="entry name" value="rRNA_lsu_MTrfase_RlmN/Cfr"/>
</dbReference>
<dbReference type="InterPro" id="IPR007197">
    <property type="entry name" value="rSAM"/>
</dbReference>
<dbReference type="NCBIfam" id="NF008396">
    <property type="entry name" value="PRK11194.1"/>
    <property type="match status" value="1"/>
</dbReference>
<dbReference type="NCBIfam" id="TIGR00048">
    <property type="entry name" value="rRNA_mod_RlmN"/>
    <property type="match status" value="1"/>
</dbReference>
<dbReference type="PANTHER" id="PTHR30544">
    <property type="entry name" value="23S RRNA METHYLTRANSFERASE"/>
    <property type="match status" value="1"/>
</dbReference>
<dbReference type="PANTHER" id="PTHR30544:SF5">
    <property type="entry name" value="RADICAL SAM CORE DOMAIN-CONTAINING PROTEIN"/>
    <property type="match status" value="1"/>
</dbReference>
<dbReference type="Pfam" id="PF04055">
    <property type="entry name" value="Radical_SAM"/>
    <property type="match status" value="1"/>
</dbReference>
<dbReference type="Pfam" id="PF21016">
    <property type="entry name" value="RlmN_N"/>
    <property type="match status" value="1"/>
</dbReference>
<dbReference type="PIRSF" id="PIRSF006004">
    <property type="entry name" value="CHP00048"/>
    <property type="match status" value="1"/>
</dbReference>
<dbReference type="SFLD" id="SFLDF00275">
    <property type="entry name" value="adenosine_C2_methyltransferase"/>
    <property type="match status" value="1"/>
</dbReference>
<dbReference type="SFLD" id="SFLDS00029">
    <property type="entry name" value="Radical_SAM"/>
    <property type="match status" value="1"/>
</dbReference>
<dbReference type="SUPFAM" id="SSF102114">
    <property type="entry name" value="Radical SAM enzymes"/>
    <property type="match status" value="1"/>
</dbReference>
<dbReference type="PROSITE" id="PS51918">
    <property type="entry name" value="RADICAL_SAM"/>
    <property type="match status" value="1"/>
</dbReference>
<sequence>MSEQLVTPENVTTKDGKINLLDLNRQQMREFFKDLGEKTFRADQVMKWMYHYCCDNFDEMTDINKVLRGKLKEVAEIRAPEVVEEQRSSDGTIKWAIAVGDQRVETVYIPEDDRATLCVSSQVGCALECKFCSTAQQGFNRNLRVSEIIGQVWRAAKIVGAAKVTGQRPITNVVMMGMGEPLLNLNNVVPAMEIMLDDFGFGLSKRRVTLSTSGVVPALDKLGDMIDVALAISLHAPNDEIRDEIVPINKKYNIETFLAAVRRYLEKSNANQGRVTIEYVMLDHVNDGTEHAHQLAELLKDTPCKINLIPWNPFPDAPYGRSSNSRIDRFSKVLMSYGFTTIVRKTRGDDIDAACGQLAGDVIDRTKRTLRKRMQGEAIDIKAV</sequence>
<organism>
    <name type="scientific">Shigella flexneri serotype 5b (strain 8401)</name>
    <dbReference type="NCBI Taxonomy" id="373384"/>
    <lineage>
        <taxon>Bacteria</taxon>
        <taxon>Pseudomonadati</taxon>
        <taxon>Pseudomonadota</taxon>
        <taxon>Gammaproteobacteria</taxon>
        <taxon>Enterobacterales</taxon>
        <taxon>Enterobacteriaceae</taxon>
        <taxon>Shigella</taxon>
    </lineage>
</organism>
<gene>
    <name evidence="1" type="primary">rlmN</name>
    <name type="ordered locus">SFV_2564</name>
</gene>
<reference key="1">
    <citation type="journal article" date="2006" name="BMC Genomics">
        <title>Complete genome sequence of Shigella flexneri 5b and comparison with Shigella flexneri 2a.</title>
        <authorList>
            <person name="Nie H."/>
            <person name="Yang F."/>
            <person name="Zhang X."/>
            <person name="Yang J."/>
            <person name="Chen L."/>
            <person name="Wang J."/>
            <person name="Xiong Z."/>
            <person name="Peng J."/>
            <person name="Sun L."/>
            <person name="Dong J."/>
            <person name="Xue Y."/>
            <person name="Xu X."/>
            <person name="Chen S."/>
            <person name="Yao Z."/>
            <person name="Shen Y."/>
            <person name="Jin Q."/>
        </authorList>
    </citation>
    <scope>NUCLEOTIDE SEQUENCE [LARGE SCALE GENOMIC DNA]</scope>
    <source>
        <strain>8401</strain>
    </source>
</reference>
<keyword id="KW-0004">4Fe-4S</keyword>
<keyword id="KW-0963">Cytoplasm</keyword>
<keyword id="KW-1015">Disulfide bond</keyword>
<keyword id="KW-0408">Iron</keyword>
<keyword id="KW-0411">Iron-sulfur</keyword>
<keyword id="KW-0479">Metal-binding</keyword>
<keyword id="KW-0489">Methyltransferase</keyword>
<keyword id="KW-0698">rRNA processing</keyword>
<keyword id="KW-0949">S-adenosyl-L-methionine</keyword>
<keyword id="KW-0808">Transferase</keyword>
<keyword id="KW-0819">tRNA processing</keyword>
<name>RLMN_SHIF8</name>
<comment type="function">
    <text evidence="1">Specifically methylates position 2 of adenine 2503 in 23S rRNA and position 2 of adenine 37 in tRNAs. m2A2503 modification seems to play a crucial role in the proofreading step occurring at the peptidyl transferase center and thus would serve to optimize ribosomal fidelity.</text>
</comment>
<comment type="catalytic activity">
    <reaction evidence="1">
        <text>adenosine(2503) in 23S rRNA + 2 reduced [2Fe-2S]-[ferredoxin] + 2 S-adenosyl-L-methionine = 2-methyladenosine(2503) in 23S rRNA + 5'-deoxyadenosine + L-methionine + 2 oxidized [2Fe-2S]-[ferredoxin] + S-adenosyl-L-homocysteine</text>
        <dbReference type="Rhea" id="RHEA:42916"/>
        <dbReference type="Rhea" id="RHEA-COMP:10000"/>
        <dbReference type="Rhea" id="RHEA-COMP:10001"/>
        <dbReference type="Rhea" id="RHEA-COMP:10152"/>
        <dbReference type="Rhea" id="RHEA-COMP:10282"/>
        <dbReference type="ChEBI" id="CHEBI:17319"/>
        <dbReference type="ChEBI" id="CHEBI:33737"/>
        <dbReference type="ChEBI" id="CHEBI:33738"/>
        <dbReference type="ChEBI" id="CHEBI:57844"/>
        <dbReference type="ChEBI" id="CHEBI:57856"/>
        <dbReference type="ChEBI" id="CHEBI:59789"/>
        <dbReference type="ChEBI" id="CHEBI:74411"/>
        <dbReference type="ChEBI" id="CHEBI:74497"/>
        <dbReference type="EC" id="2.1.1.192"/>
    </reaction>
</comment>
<comment type="catalytic activity">
    <reaction evidence="1">
        <text>adenosine(37) in tRNA + 2 reduced [2Fe-2S]-[ferredoxin] + 2 S-adenosyl-L-methionine = 2-methyladenosine(37) in tRNA + 5'-deoxyadenosine + L-methionine + 2 oxidized [2Fe-2S]-[ferredoxin] + S-adenosyl-L-homocysteine</text>
        <dbReference type="Rhea" id="RHEA:43332"/>
        <dbReference type="Rhea" id="RHEA-COMP:10000"/>
        <dbReference type="Rhea" id="RHEA-COMP:10001"/>
        <dbReference type="Rhea" id="RHEA-COMP:10162"/>
        <dbReference type="Rhea" id="RHEA-COMP:10485"/>
        <dbReference type="ChEBI" id="CHEBI:17319"/>
        <dbReference type="ChEBI" id="CHEBI:33737"/>
        <dbReference type="ChEBI" id="CHEBI:33738"/>
        <dbReference type="ChEBI" id="CHEBI:57844"/>
        <dbReference type="ChEBI" id="CHEBI:57856"/>
        <dbReference type="ChEBI" id="CHEBI:59789"/>
        <dbReference type="ChEBI" id="CHEBI:74411"/>
        <dbReference type="ChEBI" id="CHEBI:74497"/>
        <dbReference type="EC" id="2.1.1.192"/>
    </reaction>
</comment>
<comment type="cofactor">
    <cofactor evidence="1">
        <name>[4Fe-4S] cluster</name>
        <dbReference type="ChEBI" id="CHEBI:49883"/>
    </cofactor>
    <text evidence="1">Binds 1 [4Fe-4S] cluster. The cluster is coordinated with 3 cysteines and an exchangeable S-adenosyl-L-methionine.</text>
</comment>
<comment type="subcellular location">
    <subcellularLocation>
        <location evidence="1">Cytoplasm</location>
    </subcellularLocation>
</comment>
<comment type="miscellaneous">
    <text evidence="1">Reaction proceeds by a ping-pong mechanism involving intermediate methylation of a conserved cysteine residue.</text>
</comment>
<comment type="similarity">
    <text evidence="1">Belongs to the radical SAM superfamily. RlmN family.</text>
</comment>